<proteinExistence type="inferred from homology"/>
<evidence type="ECO:0000255" key="1">
    <source>
        <dbReference type="HAMAP-Rule" id="MF_01659"/>
    </source>
</evidence>
<accession>Q821B0</accession>
<accession>Q7UC59</accession>
<comment type="function">
    <text evidence="1">Catalyzes the thiamine diphosphate-dependent decarboxylation of 2-oxoglutarate and the subsequent addition of the resulting succinic semialdehyde-thiamine pyrophosphate anion to isochorismate to yield 2-succinyl-5-enolpyruvyl-6-hydroxy-3-cyclohexene-1-carboxylate (SEPHCHC).</text>
</comment>
<comment type="catalytic activity">
    <reaction evidence="1">
        <text>isochorismate + 2-oxoglutarate + H(+) = 5-enolpyruvoyl-6-hydroxy-2-succinyl-cyclohex-3-ene-1-carboxylate + CO2</text>
        <dbReference type="Rhea" id="RHEA:25593"/>
        <dbReference type="ChEBI" id="CHEBI:15378"/>
        <dbReference type="ChEBI" id="CHEBI:16526"/>
        <dbReference type="ChEBI" id="CHEBI:16810"/>
        <dbReference type="ChEBI" id="CHEBI:29780"/>
        <dbReference type="ChEBI" id="CHEBI:58818"/>
        <dbReference type="EC" id="2.2.1.9"/>
    </reaction>
</comment>
<comment type="cofactor">
    <cofactor evidence="1">
        <name>Mg(2+)</name>
        <dbReference type="ChEBI" id="CHEBI:18420"/>
    </cofactor>
    <cofactor evidence="1">
        <name>Mn(2+)</name>
        <dbReference type="ChEBI" id="CHEBI:29035"/>
    </cofactor>
</comment>
<comment type="cofactor">
    <cofactor evidence="1">
        <name>thiamine diphosphate</name>
        <dbReference type="ChEBI" id="CHEBI:58937"/>
    </cofactor>
    <text evidence="1">Binds 1 thiamine pyrophosphate per subunit.</text>
</comment>
<comment type="pathway">
    <text evidence="1">Quinol/quinone metabolism; 1,4-dihydroxy-2-naphthoate biosynthesis; 1,4-dihydroxy-2-naphthoate from chorismate: step 2/7.</text>
</comment>
<comment type="pathway">
    <text evidence="1">Quinol/quinone metabolism; menaquinone biosynthesis.</text>
</comment>
<comment type="subunit">
    <text evidence="1">Homodimer.</text>
</comment>
<comment type="similarity">
    <text evidence="1">Belongs to the TPP enzyme family. MenD subfamily.</text>
</comment>
<protein>
    <recommendedName>
        <fullName evidence="1">2-succinyl-5-enolpyruvyl-6-hydroxy-3-cyclohexene-1-carboxylate synthase</fullName>
        <shortName evidence="1">SEPHCHC synthase</shortName>
        <ecNumber evidence="1">2.2.1.9</ecNumber>
    </recommendedName>
    <alternativeName>
        <fullName evidence="1">Menaquinone biosynthesis protein MenD</fullName>
    </alternativeName>
</protein>
<dbReference type="EC" id="2.2.1.9" evidence="1"/>
<dbReference type="EMBL" id="AE005674">
    <property type="protein sequence ID" value="AAN43857.2"/>
    <property type="molecule type" value="Genomic_DNA"/>
</dbReference>
<dbReference type="EMBL" id="AE014073">
    <property type="protein sequence ID" value="AAP17676.1"/>
    <property type="molecule type" value="Genomic_DNA"/>
</dbReference>
<dbReference type="RefSeq" id="NP_708150.2">
    <property type="nucleotide sequence ID" value="NC_004337.2"/>
</dbReference>
<dbReference type="RefSeq" id="WP_005046935.1">
    <property type="nucleotide sequence ID" value="NZ_WPGW01000032.1"/>
</dbReference>
<dbReference type="SMR" id="Q821B0"/>
<dbReference type="STRING" id="198214.SF2343"/>
<dbReference type="PaxDb" id="198214-SF2343"/>
<dbReference type="GeneID" id="1027240"/>
<dbReference type="KEGG" id="sfl:SF2343"/>
<dbReference type="KEGG" id="sfx:S2477"/>
<dbReference type="PATRIC" id="fig|198214.7.peg.2807"/>
<dbReference type="HOGENOM" id="CLU_006051_3_0_6"/>
<dbReference type="UniPathway" id="UPA00079"/>
<dbReference type="UniPathway" id="UPA01057">
    <property type="reaction ID" value="UER00164"/>
</dbReference>
<dbReference type="Proteomes" id="UP000001006">
    <property type="component" value="Chromosome"/>
</dbReference>
<dbReference type="Proteomes" id="UP000002673">
    <property type="component" value="Chromosome"/>
</dbReference>
<dbReference type="GO" id="GO:0070204">
    <property type="term" value="F:2-succinyl-5-enolpyruvyl-6-hydroxy-3-cyclohexene-1-carboxylic-acid synthase activity"/>
    <property type="evidence" value="ECO:0007669"/>
    <property type="project" value="UniProtKB-UniRule"/>
</dbReference>
<dbReference type="GO" id="GO:0000287">
    <property type="term" value="F:magnesium ion binding"/>
    <property type="evidence" value="ECO:0007669"/>
    <property type="project" value="UniProtKB-UniRule"/>
</dbReference>
<dbReference type="GO" id="GO:0030145">
    <property type="term" value="F:manganese ion binding"/>
    <property type="evidence" value="ECO:0007669"/>
    <property type="project" value="UniProtKB-UniRule"/>
</dbReference>
<dbReference type="GO" id="GO:0030976">
    <property type="term" value="F:thiamine pyrophosphate binding"/>
    <property type="evidence" value="ECO:0007669"/>
    <property type="project" value="UniProtKB-UniRule"/>
</dbReference>
<dbReference type="GO" id="GO:0009234">
    <property type="term" value="P:menaquinone biosynthetic process"/>
    <property type="evidence" value="ECO:0007669"/>
    <property type="project" value="UniProtKB-UniRule"/>
</dbReference>
<dbReference type="CDD" id="cd07037">
    <property type="entry name" value="TPP_PYR_MenD"/>
    <property type="match status" value="1"/>
</dbReference>
<dbReference type="CDD" id="cd02009">
    <property type="entry name" value="TPP_SHCHC_synthase"/>
    <property type="match status" value="1"/>
</dbReference>
<dbReference type="FunFam" id="3.40.50.1220:FF:000010">
    <property type="entry name" value="2-succinyl-5-enolpyruvyl-6-hydroxy-3-cyclohexene-1-carboxylate synthase"/>
    <property type="match status" value="1"/>
</dbReference>
<dbReference type="FunFam" id="3.40.50.970:FF:000029">
    <property type="entry name" value="2-succinyl-5-enolpyruvyl-6-hydroxy-3-cyclohexene-1-carboxylate synthase"/>
    <property type="match status" value="1"/>
</dbReference>
<dbReference type="Gene3D" id="3.40.50.970">
    <property type="match status" value="2"/>
</dbReference>
<dbReference type="Gene3D" id="3.40.50.1220">
    <property type="entry name" value="TPP-binding domain"/>
    <property type="match status" value="1"/>
</dbReference>
<dbReference type="HAMAP" id="MF_01659">
    <property type="entry name" value="MenD"/>
    <property type="match status" value="1"/>
</dbReference>
<dbReference type="InterPro" id="IPR004433">
    <property type="entry name" value="MenaQ_synth_MenD"/>
</dbReference>
<dbReference type="InterPro" id="IPR032264">
    <property type="entry name" value="MenD_middle"/>
</dbReference>
<dbReference type="InterPro" id="IPR029061">
    <property type="entry name" value="THDP-binding"/>
</dbReference>
<dbReference type="InterPro" id="IPR012001">
    <property type="entry name" value="Thiamin_PyroP_enz_TPP-bd_dom"/>
</dbReference>
<dbReference type="InterPro" id="IPR011766">
    <property type="entry name" value="TPP_enzyme_TPP-bd"/>
</dbReference>
<dbReference type="NCBIfam" id="TIGR00173">
    <property type="entry name" value="menD"/>
    <property type="match status" value="1"/>
</dbReference>
<dbReference type="PANTHER" id="PTHR42916">
    <property type="entry name" value="2-SUCCINYL-5-ENOLPYRUVYL-6-HYDROXY-3-CYCLOHEXENE-1-CARBOXYLATE SYNTHASE"/>
    <property type="match status" value="1"/>
</dbReference>
<dbReference type="PANTHER" id="PTHR42916:SF1">
    <property type="entry name" value="PROTEIN PHYLLO, CHLOROPLASTIC"/>
    <property type="match status" value="1"/>
</dbReference>
<dbReference type="Pfam" id="PF02775">
    <property type="entry name" value="TPP_enzyme_C"/>
    <property type="match status" value="1"/>
</dbReference>
<dbReference type="Pfam" id="PF16582">
    <property type="entry name" value="TPP_enzyme_M_2"/>
    <property type="match status" value="1"/>
</dbReference>
<dbReference type="Pfam" id="PF02776">
    <property type="entry name" value="TPP_enzyme_N"/>
    <property type="match status" value="1"/>
</dbReference>
<dbReference type="PIRSF" id="PIRSF004983">
    <property type="entry name" value="MenD"/>
    <property type="match status" value="1"/>
</dbReference>
<dbReference type="SUPFAM" id="SSF52518">
    <property type="entry name" value="Thiamin diphosphate-binding fold (THDP-binding)"/>
    <property type="match status" value="2"/>
</dbReference>
<feature type="chain" id="PRO_0000341845" description="2-succinyl-5-enolpyruvyl-6-hydroxy-3-cyclohexene-1-carboxylate synthase">
    <location>
        <begin position="1"/>
        <end position="556"/>
    </location>
</feature>
<reference key="1">
    <citation type="journal article" date="2002" name="Nucleic Acids Res.">
        <title>Genome sequence of Shigella flexneri 2a: insights into pathogenicity through comparison with genomes of Escherichia coli K12 and O157.</title>
        <authorList>
            <person name="Jin Q."/>
            <person name="Yuan Z."/>
            <person name="Xu J."/>
            <person name="Wang Y."/>
            <person name="Shen Y."/>
            <person name="Lu W."/>
            <person name="Wang J."/>
            <person name="Liu H."/>
            <person name="Yang J."/>
            <person name="Yang F."/>
            <person name="Zhang X."/>
            <person name="Zhang J."/>
            <person name="Yang G."/>
            <person name="Wu H."/>
            <person name="Qu D."/>
            <person name="Dong J."/>
            <person name="Sun L."/>
            <person name="Xue Y."/>
            <person name="Zhao A."/>
            <person name="Gao Y."/>
            <person name="Zhu J."/>
            <person name="Kan B."/>
            <person name="Ding K."/>
            <person name="Chen S."/>
            <person name="Cheng H."/>
            <person name="Yao Z."/>
            <person name="He B."/>
            <person name="Chen R."/>
            <person name="Ma D."/>
            <person name="Qiang B."/>
            <person name="Wen Y."/>
            <person name="Hou Y."/>
            <person name="Yu J."/>
        </authorList>
    </citation>
    <scope>NUCLEOTIDE SEQUENCE [LARGE SCALE GENOMIC DNA]</scope>
    <source>
        <strain>301 / Serotype 2a</strain>
    </source>
</reference>
<reference key="2">
    <citation type="journal article" date="2003" name="Infect. Immun.">
        <title>Complete genome sequence and comparative genomics of Shigella flexneri serotype 2a strain 2457T.</title>
        <authorList>
            <person name="Wei J."/>
            <person name="Goldberg M.B."/>
            <person name="Burland V."/>
            <person name="Venkatesan M.M."/>
            <person name="Deng W."/>
            <person name="Fournier G."/>
            <person name="Mayhew G.F."/>
            <person name="Plunkett G. III"/>
            <person name="Rose D.J."/>
            <person name="Darling A."/>
            <person name="Mau B."/>
            <person name="Perna N.T."/>
            <person name="Payne S.M."/>
            <person name="Runyen-Janecky L.J."/>
            <person name="Zhou S."/>
            <person name="Schwartz D.C."/>
            <person name="Blattner F.R."/>
        </authorList>
    </citation>
    <scope>NUCLEOTIDE SEQUENCE [LARGE SCALE GENOMIC DNA]</scope>
    <source>
        <strain>ATCC 700930 / 2457T / Serotype 2a</strain>
    </source>
</reference>
<keyword id="KW-0460">Magnesium</keyword>
<keyword id="KW-0464">Manganese</keyword>
<keyword id="KW-0474">Menaquinone biosynthesis</keyword>
<keyword id="KW-0479">Metal-binding</keyword>
<keyword id="KW-1185">Reference proteome</keyword>
<keyword id="KW-0786">Thiamine pyrophosphate</keyword>
<keyword id="KW-0808">Transferase</keyword>
<gene>
    <name evidence="1" type="primary">menD</name>
    <name type="ordered locus">SF2343</name>
    <name type="ordered locus">S2477</name>
</gene>
<sequence>MSVSAFNRRWAAVILEALTRHGVRHICIAPGSRSTPLTLAAAENSAFIHHTHFDERGLGHLALGLAKVSKQPVAVIVTSGTAVANLYPALIEAGLTGEKLILLTADRPPELIDCGANQAIRQPGMFASHPTHSISLPRPTQDIPARWLVSTIDHALGTLHAGGVHINCPFAEPLYGEMDDTGLSWQQRLGDWWQDDKPWLREAPRLESEKQRDWFFWRQKRGVVVAGRMSAEEGKKVALWAQTLGWPLIGDVLSQTGQPLPCADLWLGNAKATSELQQAQIVVQLGSSLTGKRLLQWQASCEPEEYWIVDDIEGRLDPAHHRGRRLIANIADWLELHPAEKRQPWCVEIPRLAEQAMQAVIARRDAFGEAQLAHRISDYLPEQGQLFVGNSLVVRLIDALSQLPAGYPVYSNRGASGIDGLLSTAAGVQRASGKPTLAIVGDLSALYDLNALALLRQVSAPLVLIVVNNNGGQIFSLLPTPQSERERFYLMPQNVHFEHAAAMFELKYHHPQNWQELETAFADAWRTPTTTVIEMVVNDTDGAQTLQQLLAQVSHL</sequence>
<name>MEND_SHIFL</name>
<organism>
    <name type="scientific">Shigella flexneri</name>
    <dbReference type="NCBI Taxonomy" id="623"/>
    <lineage>
        <taxon>Bacteria</taxon>
        <taxon>Pseudomonadati</taxon>
        <taxon>Pseudomonadota</taxon>
        <taxon>Gammaproteobacteria</taxon>
        <taxon>Enterobacterales</taxon>
        <taxon>Enterobacteriaceae</taxon>
        <taxon>Shigella</taxon>
    </lineage>
</organism>